<keyword id="KW-0342">GTP-binding</keyword>
<keyword id="KW-0506">mRNA capping</keyword>
<keyword id="KW-0507">mRNA processing</keyword>
<keyword id="KW-0547">Nucleotide-binding</keyword>
<keyword id="KW-0548">Nucleotidyltransferase</keyword>
<keyword id="KW-0539">Nucleus</keyword>
<keyword id="KW-1185">Reference proteome</keyword>
<keyword id="KW-0808">Transferase</keyword>
<evidence type="ECO:0000250" key="1"/>
<evidence type="ECO:0000250" key="2">
    <source>
        <dbReference type="UniProtKB" id="Q01159"/>
    </source>
</evidence>
<evidence type="ECO:0000305" key="3"/>
<organism>
    <name type="scientific">Neurospora crassa (strain ATCC 24698 / 74-OR23-1A / CBS 708.71 / DSM 1257 / FGSC 987)</name>
    <dbReference type="NCBI Taxonomy" id="367110"/>
    <lineage>
        <taxon>Eukaryota</taxon>
        <taxon>Fungi</taxon>
        <taxon>Dikarya</taxon>
        <taxon>Ascomycota</taxon>
        <taxon>Pezizomycotina</taxon>
        <taxon>Sordariomycetes</taxon>
        <taxon>Sordariomycetidae</taxon>
        <taxon>Sordariales</taxon>
        <taxon>Sordariaceae</taxon>
        <taxon>Neurospora</taxon>
    </lineage>
</organism>
<gene>
    <name type="primary">rnp-2</name>
    <name type="ORF">NCU06260</name>
</gene>
<feature type="chain" id="PRO_0000210103" description="mRNA-capping enzyme subunit alpha">
    <location>
        <begin position="1"/>
        <end position="402"/>
    </location>
</feature>
<feature type="active site" description="N6-GMP-lysine intermediate" evidence="1">
    <location>
        <position position="66"/>
    </location>
</feature>
<dbReference type="EC" id="2.7.7.50" evidence="2"/>
<dbReference type="EMBL" id="CM002238">
    <property type="protein sequence ID" value="ESA43219.1"/>
    <property type="molecule type" value="Genomic_DNA"/>
</dbReference>
<dbReference type="RefSeq" id="XP_011393903.1">
    <property type="nucleotide sequence ID" value="XM_011395601.1"/>
</dbReference>
<dbReference type="SMR" id="Q7SB53"/>
<dbReference type="FunCoup" id="Q7SB53">
    <property type="interactions" value="414"/>
</dbReference>
<dbReference type="STRING" id="367110.Q7SB53"/>
<dbReference type="PaxDb" id="5141-EFNCRP00000005948"/>
<dbReference type="EnsemblFungi" id="ESA43219">
    <property type="protein sequence ID" value="ESA43219"/>
    <property type="gene ID" value="NCU06260"/>
</dbReference>
<dbReference type="GeneID" id="3879017"/>
<dbReference type="KEGG" id="ncr:NCU06260"/>
<dbReference type="VEuPathDB" id="FungiDB:NCU06260"/>
<dbReference type="HOGENOM" id="CLU_021710_0_2_1"/>
<dbReference type="InParanoid" id="Q7SB53"/>
<dbReference type="OMA" id="KDYYVCE"/>
<dbReference type="OrthoDB" id="200924at2759"/>
<dbReference type="Proteomes" id="UP000001805">
    <property type="component" value="Chromosome 3, Linkage Group III"/>
</dbReference>
<dbReference type="GO" id="GO:0031533">
    <property type="term" value="C:mRNA capping enzyme complex"/>
    <property type="evidence" value="ECO:0007669"/>
    <property type="project" value="EnsemblFungi"/>
</dbReference>
<dbReference type="GO" id="GO:0005524">
    <property type="term" value="F:ATP binding"/>
    <property type="evidence" value="ECO:0007669"/>
    <property type="project" value="InterPro"/>
</dbReference>
<dbReference type="GO" id="GO:0005525">
    <property type="term" value="F:GTP binding"/>
    <property type="evidence" value="ECO:0007669"/>
    <property type="project" value="UniProtKB-KW"/>
</dbReference>
<dbReference type="GO" id="GO:0004484">
    <property type="term" value="F:mRNA guanylyltransferase activity"/>
    <property type="evidence" value="ECO:0000318"/>
    <property type="project" value="GO_Central"/>
</dbReference>
<dbReference type="GO" id="GO:0099122">
    <property type="term" value="F:RNA polymerase II C-terminal domain binding"/>
    <property type="evidence" value="ECO:0007669"/>
    <property type="project" value="EnsemblFungi"/>
</dbReference>
<dbReference type="GO" id="GO:0006370">
    <property type="term" value="P:7-methylguanosine mRNA capping"/>
    <property type="evidence" value="ECO:0000318"/>
    <property type="project" value="GO_Central"/>
</dbReference>
<dbReference type="GO" id="GO:0045944">
    <property type="term" value="P:positive regulation of transcription by RNA polymerase II"/>
    <property type="evidence" value="ECO:0007669"/>
    <property type="project" value="EnsemblFungi"/>
</dbReference>
<dbReference type="GO" id="GO:0008033">
    <property type="term" value="P:tRNA processing"/>
    <property type="evidence" value="ECO:0007669"/>
    <property type="project" value="EnsemblFungi"/>
</dbReference>
<dbReference type="CDD" id="cd07895">
    <property type="entry name" value="Adenylation_mRNA_capping"/>
    <property type="match status" value="1"/>
</dbReference>
<dbReference type="FunFam" id="2.40.50.140:FF:000275">
    <property type="entry name" value="mRNA-capping enzyme subunit alpha"/>
    <property type="match status" value="1"/>
</dbReference>
<dbReference type="FunFam" id="3.30.470.30:FF:000011">
    <property type="entry name" value="mRNA-capping enzyme subunit alpha"/>
    <property type="match status" value="1"/>
</dbReference>
<dbReference type="Gene3D" id="3.30.470.30">
    <property type="entry name" value="DNA ligase/mRNA capping enzyme"/>
    <property type="match status" value="1"/>
</dbReference>
<dbReference type="Gene3D" id="2.40.50.140">
    <property type="entry name" value="Nucleic acid-binding proteins"/>
    <property type="match status" value="1"/>
</dbReference>
<dbReference type="InterPro" id="IPR001339">
    <property type="entry name" value="mRNA_cap_enzyme_adenylation"/>
</dbReference>
<dbReference type="InterPro" id="IPR017075">
    <property type="entry name" value="mRNA_cap_enzyme_alpha"/>
</dbReference>
<dbReference type="InterPro" id="IPR013846">
    <property type="entry name" value="mRNA_cap_enzyme_C"/>
</dbReference>
<dbReference type="InterPro" id="IPR051029">
    <property type="entry name" value="mRNA_Capping_Enz/RNA_Phosphat"/>
</dbReference>
<dbReference type="InterPro" id="IPR012340">
    <property type="entry name" value="NA-bd_OB-fold"/>
</dbReference>
<dbReference type="PANTHER" id="PTHR10367">
    <property type="entry name" value="MRNA-CAPPING ENZYME"/>
    <property type="match status" value="1"/>
</dbReference>
<dbReference type="PANTHER" id="PTHR10367:SF17">
    <property type="entry name" value="MRNA-CAPPING ENZYME"/>
    <property type="match status" value="1"/>
</dbReference>
<dbReference type="Pfam" id="PF03919">
    <property type="entry name" value="mRNA_cap_C"/>
    <property type="match status" value="1"/>
</dbReference>
<dbReference type="Pfam" id="PF01331">
    <property type="entry name" value="mRNA_cap_enzyme"/>
    <property type="match status" value="1"/>
</dbReference>
<dbReference type="PIRSF" id="PIRSF036959">
    <property type="entry name" value="mRNA_cap_alpha"/>
    <property type="match status" value="1"/>
</dbReference>
<dbReference type="SUPFAM" id="SSF56091">
    <property type="entry name" value="DNA ligase/mRNA capping enzyme, catalytic domain"/>
    <property type="match status" value="1"/>
</dbReference>
<dbReference type="SUPFAM" id="SSF50249">
    <property type="entry name" value="Nucleic acid-binding proteins"/>
    <property type="match status" value="1"/>
</dbReference>
<proteinExistence type="inferred from homology"/>
<comment type="function">
    <text evidence="2">Second step of mRNA capping. Transfer of the GMP moiety of GTP to the 5'-end of RNA via an enzyme-GMP covalent reaction intermediate.</text>
</comment>
<comment type="catalytic activity">
    <reaction evidence="2">
        <text>a 5'-end diphospho-ribonucleoside in mRNA + GTP + H(+) = a 5'-end (5'-triphosphoguanosine)-ribonucleoside in mRNA + diphosphate</text>
        <dbReference type="Rhea" id="RHEA:67012"/>
        <dbReference type="Rhea" id="RHEA-COMP:17165"/>
        <dbReference type="Rhea" id="RHEA-COMP:17166"/>
        <dbReference type="ChEBI" id="CHEBI:15378"/>
        <dbReference type="ChEBI" id="CHEBI:33019"/>
        <dbReference type="ChEBI" id="CHEBI:37565"/>
        <dbReference type="ChEBI" id="CHEBI:167616"/>
        <dbReference type="ChEBI" id="CHEBI:167617"/>
        <dbReference type="EC" id="2.7.7.50"/>
    </reaction>
    <physiologicalReaction direction="left-to-right" evidence="2">
        <dbReference type="Rhea" id="RHEA:67013"/>
    </physiologicalReaction>
</comment>
<comment type="subunit">
    <text evidence="2">Heterodimer. The mRNA-capping enzyme is composed of two separate chains alpha and beta, respectively a mRNA guanylyltransferase and an mRNA 5'-triphosphate monophosphatase.</text>
</comment>
<comment type="subcellular location">
    <subcellularLocation>
        <location evidence="1">Nucleus</location>
    </subcellularLocation>
</comment>
<comment type="similarity">
    <text evidence="3">Belongs to the eukaryotic GTase family.</text>
</comment>
<protein>
    <recommendedName>
        <fullName>mRNA-capping enzyme subunit alpha</fullName>
    </recommendedName>
    <alternativeName>
        <fullName>GTP--RNA guanylyltransferase</fullName>
        <shortName>GTase</shortName>
    </alternativeName>
    <alternativeName>
        <fullName>mRNA guanylyltransferase</fullName>
        <ecNumber evidence="2">2.7.7.50</ecNumber>
    </alternativeName>
    <alternativeName>
        <fullName>mRNA processing protein 2</fullName>
    </alternativeName>
</protein>
<reference key="1">
    <citation type="journal article" date="2003" name="Nature">
        <title>The genome sequence of the filamentous fungus Neurospora crassa.</title>
        <authorList>
            <person name="Galagan J.E."/>
            <person name="Calvo S.E."/>
            <person name="Borkovich K.A."/>
            <person name="Selker E.U."/>
            <person name="Read N.D."/>
            <person name="Jaffe D.B."/>
            <person name="FitzHugh W."/>
            <person name="Ma L.-J."/>
            <person name="Smirnov S."/>
            <person name="Purcell S."/>
            <person name="Rehman B."/>
            <person name="Elkins T."/>
            <person name="Engels R."/>
            <person name="Wang S."/>
            <person name="Nielsen C.B."/>
            <person name="Butler J."/>
            <person name="Endrizzi M."/>
            <person name="Qui D."/>
            <person name="Ianakiev P."/>
            <person name="Bell-Pedersen D."/>
            <person name="Nelson M.A."/>
            <person name="Werner-Washburne M."/>
            <person name="Selitrennikoff C.P."/>
            <person name="Kinsey J.A."/>
            <person name="Braun E.L."/>
            <person name="Zelter A."/>
            <person name="Schulte U."/>
            <person name="Kothe G.O."/>
            <person name="Jedd G."/>
            <person name="Mewes H.-W."/>
            <person name="Staben C."/>
            <person name="Marcotte E."/>
            <person name="Greenberg D."/>
            <person name="Roy A."/>
            <person name="Foley K."/>
            <person name="Naylor J."/>
            <person name="Stange-Thomann N."/>
            <person name="Barrett R."/>
            <person name="Gnerre S."/>
            <person name="Kamal M."/>
            <person name="Kamvysselis M."/>
            <person name="Mauceli E.W."/>
            <person name="Bielke C."/>
            <person name="Rudd S."/>
            <person name="Frishman D."/>
            <person name="Krystofova S."/>
            <person name="Rasmussen C."/>
            <person name="Metzenberg R.L."/>
            <person name="Perkins D.D."/>
            <person name="Kroken S."/>
            <person name="Cogoni C."/>
            <person name="Macino G."/>
            <person name="Catcheside D.E.A."/>
            <person name="Li W."/>
            <person name="Pratt R.J."/>
            <person name="Osmani S.A."/>
            <person name="DeSouza C.P.C."/>
            <person name="Glass N.L."/>
            <person name="Orbach M.J."/>
            <person name="Berglund J.A."/>
            <person name="Voelker R."/>
            <person name="Yarden O."/>
            <person name="Plamann M."/>
            <person name="Seiler S."/>
            <person name="Dunlap J.C."/>
            <person name="Radford A."/>
            <person name="Aramayo R."/>
            <person name="Natvig D.O."/>
            <person name="Alex L.A."/>
            <person name="Mannhaupt G."/>
            <person name="Ebbole D.J."/>
            <person name="Freitag M."/>
            <person name="Paulsen I."/>
            <person name="Sachs M.S."/>
            <person name="Lander E.S."/>
            <person name="Nusbaum C."/>
            <person name="Birren B.W."/>
        </authorList>
    </citation>
    <scope>NUCLEOTIDE SEQUENCE [LARGE SCALE GENOMIC DNA]</scope>
    <source>
        <strain>ATCC 24698 / 74-OR23-1A / CBS 708.71 / DSM 1257 / FGSC 987</strain>
    </source>
</reference>
<accession>Q7SB53</accession>
<accession>U9W4P3</accession>
<name>MCE1_NEUCR</name>
<sequence>MEQPGPITDIAKPGIKAPRDLAISLREEVARILGRSSIGFPGAQPVSFARKHLEELRREDYYVCEKSDGIRYLLYLTVDEEGQEVQYLIDRKNDYWFLPRNSMHFPMPNDIQAFHRGTIIDGELVMDTVPGTNGRKEPRFLVFDLLALDDKAELLNKPLDKRLGYFSAYIYEPYKKLLQQFPQEIPFMAFKVEMKRMELSYGIETMFREVIPALKHDSDGLIFTCRTTPYHFGTDPHILKWKAPHENTLDFRMRLNFPLVQATEAELDEGFPEQFTDYDSVPQAELYVFCGNDGPGGSKYELFPDPLYIAEDEWETLKALGDPLQDRVVECCLDAENRWRLFRFRDDKNEANHTSTVSSVMASIRDGVSDQELLSAATAIKESWKIRAQKRKEQQQQQQPKH</sequence>